<accession>B3EWI2</accession>
<protein>
    <recommendedName>
        <fullName>Allatostatin-A1</fullName>
        <shortName>AST-A1</shortName>
    </recommendedName>
    <alternativeName>
        <fullName>ARPYSFGL-amide</fullName>
    </alternativeName>
</protein>
<comment type="function">
    <text evidence="1">May act as a neurotransmitter or neuromodulator.</text>
</comment>
<comment type="subcellular location">
    <subcellularLocation>
        <location evidence="2">Secreted</location>
    </subcellularLocation>
</comment>
<comment type="tissue specificity">
    <text evidence="4 5">In larvae, expressed in the CNS and midgut but not in the ring gland, thoracic perisymapthetic organs (tPSO) or abdominal perisymapthetic organs (aPSO) (at protein level). In adults, expressed in the corpora cardiaca, corpora allata, brain and the thoracic-abdominal ganglion (at protein level).</text>
</comment>
<comment type="developmental stage">
    <text evidence="4 5">Detected in larvae and adults.</text>
</comment>
<comment type="mass spectrometry"/>
<comment type="similarity">
    <text evidence="3">Belongs to the allatostatin family.</text>
</comment>
<evidence type="ECO:0000250" key="1">
    <source>
        <dbReference type="UniProtKB" id="O44314"/>
    </source>
</evidence>
<evidence type="ECO:0000250" key="2">
    <source>
        <dbReference type="UniProtKB" id="P82155"/>
    </source>
</evidence>
<evidence type="ECO:0000255" key="3"/>
<evidence type="ECO:0000269" key="4">
    <source>
    </source>
</evidence>
<evidence type="ECO:0000269" key="5">
    <source>
    </source>
</evidence>
<evidence type="ECO:0000305" key="6"/>
<keyword id="KW-0027">Amidation</keyword>
<keyword id="KW-0903">Direct protein sequencing</keyword>
<keyword id="KW-0527">Neuropeptide</keyword>
<keyword id="KW-0964">Secreted</keyword>
<feature type="peptide" id="PRO_0000419711" description="Allatostatin-A1">
    <location>
        <begin position="1"/>
        <end position="8"/>
    </location>
</feature>
<feature type="modified residue" description="Leucine amide" evidence="4 5">
    <location>
        <position position="8"/>
    </location>
</feature>
<feature type="unsure residue" description="L or I" evidence="5">
    <location>
        <position position="8"/>
    </location>
</feature>
<dbReference type="GO" id="GO:0005576">
    <property type="term" value="C:extracellular region"/>
    <property type="evidence" value="ECO:0007669"/>
    <property type="project" value="UniProtKB-SubCell"/>
</dbReference>
<dbReference type="GO" id="GO:0007218">
    <property type="term" value="P:neuropeptide signaling pathway"/>
    <property type="evidence" value="ECO:0007669"/>
    <property type="project" value="UniProtKB-KW"/>
</dbReference>
<organism>
    <name type="scientific">Delia radicum</name>
    <name type="common">Cabbage root fly</name>
    <name type="synonym">Anthomyia brassicae</name>
    <dbReference type="NCBI Taxonomy" id="30064"/>
    <lineage>
        <taxon>Eukaryota</taxon>
        <taxon>Metazoa</taxon>
        <taxon>Ecdysozoa</taxon>
        <taxon>Arthropoda</taxon>
        <taxon>Hexapoda</taxon>
        <taxon>Insecta</taxon>
        <taxon>Pterygota</taxon>
        <taxon>Neoptera</taxon>
        <taxon>Endopterygota</taxon>
        <taxon>Diptera</taxon>
        <taxon>Brachycera</taxon>
        <taxon>Muscomorpha</taxon>
        <taxon>Muscoidea</taxon>
        <taxon>Anthomyiidae</taxon>
        <taxon>Anthomyiinae</taxon>
        <taxon>Delia</taxon>
    </lineage>
</organism>
<name>ALLA1_DELRA</name>
<reference evidence="6" key="1">
    <citation type="journal article" date="2011" name="Peptides">
        <title>Neuropeptides associated with the central nervous system of the cabbage root fly, Delia radicum (L).</title>
        <authorList>
            <person name="Audsley N."/>
            <person name="Matthews H.J."/>
            <person name="Down R.E."/>
            <person name="Weaver R.J."/>
        </authorList>
    </citation>
    <scope>PROTEIN SEQUENCE</scope>
    <scope>TISSUE SPECIFICITY</scope>
    <scope>MASS SPECTROMETRY</scope>
    <scope>AMIDATION AT LEU-8</scope>
    <source>
        <tissue evidence="4">Abdominal ganglion</tissue>
        <tissue evidence="4">Brain</tissue>
        <tissue evidence="4">Corpora allata</tissue>
        <tissue evidence="4">Corpora cardiaca</tissue>
    </source>
</reference>
<reference evidence="6" key="2">
    <citation type="journal article" date="2012" name="PLoS ONE">
        <title>Peptidomics of the agriculturally damaging larval stage of the cabbage root fly Delia radicum (Diptera: Anthomyiidae).</title>
        <authorList>
            <person name="Zoephel J."/>
            <person name="Reiher W."/>
            <person name="Rexer K.-H."/>
            <person name="Kahnt J."/>
            <person name="Wegener C."/>
        </authorList>
    </citation>
    <scope>PROTEIN SEQUENCE</scope>
    <scope>TISSUE SPECIFICITY</scope>
    <scope>DEVELOPMENTAL STAGE</scope>
    <scope>MASS SPECTROMETRY</scope>
    <scope>AMIDATION AT LEU-8</scope>
    <source>
        <tissue evidence="5">CNS</tissue>
    </source>
</reference>
<proteinExistence type="evidence at protein level"/>
<sequence>ARPYSFGL</sequence>